<name>RL10_STAA1</name>
<sequence length="166" mass="17710">MSAIIEAKKQLVDEIAEVLSNSVSTVIVDYRGLTVAEVTDLRSQLREAGVEYKVYKNTMVRRAAEKAGIEGLDEFLTGPTAIATSSEDAVAAAKVISGFAKDHEALEIKSGVMEGNVITAEEVKTVGSLPSHDGLVSMLLSVLQAPVRNFAYAVKAIGEQKEENAE</sequence>
<gene>
    <name evidence="1" type="primary">rplJ</name>
    <name type="ordered locus">SAHV_0537</name>
</gene>
<dbReference type="EMBL" id="AP009324">
    <property type="protein sequence ID" value="BAF77420.1"/>
    <property type="molecule type" value="Genomic_DNA"/>
</dbReference>
<dbReference type="RefSeq" id="WP_001273085.1">
    <property type="nucleotide sequence ID" value="NZ_CTYB01000013.1"/>
</dbReference>
<dbReference type="SMR" id="A7WYW2"/>
<dbReference type="KEGG" id="saw:SAHV_0537"/>
<dbReference type="HOGENOM" id="CLU_092227_2_0_9"/>
<dbReference type="GO" id="GO:0015934">
    <property type="term" value="C:large ribosomal subunit"/>
    <property type="evidence" value="ECO:0007669"/>
    <property type="project" value="InterPro"/>
</dbReference>
<dbReference type="GO" id="GO:0070180">
    <property type="term" value="F:large ribosomal subunit rRNA binding"/>
    <property type="evidence" value="ECO:0007669"/>
    <property type="project" value="UniProtKB-UniRule"/>
</dbReference>
<dbReference type="GO" id="GO:0003735">
    <property type="term" value="F:structural constituent of ribosome"/>
    <property type="evidence" value="ECO:0007669"/>
    <property type="project" value="InterPro"/>
</dbReference>
<dbReference type="GO" id="GO:0006412">
    <property type="term" value="P:translation"/>
    <property type="evidence" value="ECO:0007669"/>
    <property type="project" value="UniProtKB-UniRule"/>
</dbReference>
<dbReference type="CDD" id="cd05797">
    <property type="entry name" value="Ribosomal_L10"/>
    <property type="match status" value="1"/>
</dbReference>
<dbReference type="FunFam" id="3.30.70.1730:FF:000001">
    <property type="entry name" value="50S ribosomal protein L10"/>
    <property type="match status" value="1"/>
</dbReference>
<dbReference type="Gene3D" id="3.30.70.1730">
    <property type="match status" value="1"/>
</dbReference>
<dbReference type="Gene3D" id="6.10.250.290">
    <property type="match status" value="1"/>
</dbReference>
<dbReference type="HAMAP" id="MF_00362">
    <property type="entry name" value="Ribosomal_uL10"/>
    <property type="match status" value="1"/>
</dbReference>
<dbReference type="InterPro" id="IPR001790">
    <property type="entry name" value="Ribosomal_uL10"/>
</dbReference>
<dbReference type="InterPro" id="IPR043141">
    <property type="entry name" value="Ribosomal_uL10-like_sf"/>
</dbReference>
<dbReference type="InterPro" id="IPR022973">
    <property type="entry name" value="Ribosomal_uL10_bac"/>
</dbReference>
<dbReference type="InterPro" id="IPR047865">
    <property type="entry name" value="Ribosomal_uL10_bac_type"/>
</dbReference>
<dbReference type="InterPro" id="IPR002363">
    <property type="entry name" value="Ribosomal_uL10_CS_bac"/>
</dbReference>
<dbReference type="NCBIfam" id="NF000955">
    <property type="entry name" value="PRK00099.1-1"/>
    <property type="match status" value="1"/>
</dbReference>
<dbReference type="PANTHER" id="PTHR11560">
    <property type="entry name" value="39S RIBOSOMAL PROTEIN L10, MITOCHONDRIAL"/>
    <property type="match status" value="1"/>
</dbReference>
<dbReference type="Pfam" id="PF00466">
    <property type="entry name" value="Ribosomal_L10"/>
    <property type="match status" value="1"/>
</dbReference>
<dbReference type="SUPFAM" id="SSF160369">
    <property type="entry name" value="Ribosomal protein L10-like"/>
    <property type="match status" value="1"/>
</dbReference>
<dbReference type="PROSITE" id="PS01109">
    <property type="entry name" value="RIBOSOMAL_L10"/>
    <property type="match status" value="1"/>
</dbReference>
<feature type="chain" id="PRO_1000005602" description="Large ribosomal subunit protein uL10">
    <location>
        <begin position="1"/>
        <end position="166"/>
    </location>
</feature>
<keyword id="KW-0687">Ribonucleoprotein</keyword>
<keyword id="KW-0689">Ribosomal protein</keyword>
<keyword id="KW-0694">RNA-binding</keyword>
<keyword id="KW-0699">rRNA-binding</keyword>
<reference key="1">
    <citation type="journal article" date="2008" name="Antimicrob. Agents Chemother.">
        <title>Mutated response regulator graR is responsible for phenotypic conversion of Staphylococcus aureus from heterogeneous vancomycin-intermediate resistance to vancomycin-intermediate resistance.</title>
        <authorList>
            <person name="Neoh H.-M."/>
            <person name="Cui L."/>
            <person name="Yuzawa H."/>
            <person name="Takeuchi F."/>
            <person name="Matsuo M."/>
            <person name="Hiramatsu K."/>
        </authorList>
    </citation>
    <scope>NUCLEOTIDE SEQUENCE [LARGE SCALE GENOMIC DNA]</scope>
    <source>
        <strain>Mu3 / ATCC 700698</strain>
    </source>
</reference>
<organism>
    <name type="scientific">Staphylococcus aureus (strain Mu3 / ATCC 700698)</name>
    <dbReference type="NCBI Taxonomy" id="418127"/>
    <lineage>
        <taxon>Bacteria</taxon>
        <taxon>Bacillati</taxon>
        <taxon>Bacillota</taxon>
        <taxon>Bacilli</taxon>
        <taxon>Bacillales</taxon>
        <taxon>Staphylococcaceae</taxon>
        <taxon>Staphylococcus</taxon>
    </lineage>
</organism>
<proteinExistence type="inferred from homology"/>
<comment type="function">
    <text evidence="1">Forms part of the ribosomal stalk, playing a central role in the interaction of the ribosome with GTP-bound translation factors.</text>
</comment>
<comment type="subunit">
    <text evidence="1">Part of the ribosomal stalk of the 50S ribosomal subunit. The N-terminus interacts with L11 and the large rRNA to form the base of the stalk. The C-terminus forms an elongated spine to which L12 dimers bind in a sequential fashion forming a multimeric L10(L12)X complex.</text>
</comment>
<comment type="similarity">
    <text evidence="1">Belongs to the universal ribosomal protein uL10 family.</text>
</comment>
<protein>
    <recommendedName>
        <fullName evidence="1">Large ribosomal subunit protein uL10</fullName>
    </recommendedName>
    <alternativeName>
        <fullName evidence="2">50S ribosomal protein L10</fullName>
    </alternativeName>
</protein>
<evidence type="ECO:0000255" key="1">
    <source>
        <dbReference type="HAMAP-Rule" id="MF_00362"/>
    </source>
</evidence>
<evidence type="ECO:0000305" key="2"/>
<accession>A7WYW2</accession>